<accession>P0CAT5</accession>
<proteinExistence type="inferred from homology"/>
<gene>
    <name type="primary">PTP2</name>
</gene>
<reference key="1">
    <citation type="journal article" date="2001" name="Infect. Immun.">
        <title>Microsporidian invasion apparatus: identification of a novel polar tube protein and evidence for clustering of ptp1 and ptp2 genes in three Encephalitozoon species.</title>
        <authorList>
            <person name="Delbac F."/>
            <person name="Peuvel I."/>
            <person name="Metenier G."/>
            <person name="Peyretaillade E."/>
            <person name="Vivares C.P."/>
        </authorList>
    </citation>
    <scope>NUCLEOTIDE SEQUENCE [GENOMIC DNA]</scope>
</reference>
<reference key="2">
    <citation type="patent" date="2000-01-13" number="WO0001724">
        <title>Microsporidium polar tube proteins, nucleic acids coding for said proteins and their uses.</title>
        <authorList>
            <person name="Vivares C.P."/>
            <person name="Danchin A."/>
            <person name="Delbac F."/>
        </authorList>
    </citation>
    <scope>NUCLEOTIDE SEQUENCE [GENOMIC DNA]</scope>
</reference>
<name>PTP2_ENCHE</name>
<protein>
    <recommendedName>
        <fullName>Polar tube protein 2</fullName>
    </recommendedName>
</protein>
<evidence type="ECO:0000250" key="1"/>
<evidence type="ECO:0000255" key="2"/>
<evidence type="ECO:0000256" key="3">
    <source>
        <dbReference type="SAM" id="MobiDB-lite"/>
    </source>
</evidence>
<dbReference type="EMBL" id="AX007053">
    <property type="status" value="NOT_ANNOTATED_CDS"/>
    <property type="molecule type" value="Genomic_DNA"/>
</dbReference>
<dbReference type="GlyCosmos" id="P0CAT5">
    <property type="glycosylation" value="1 site, No reported glycans"/>
</dbReference>
<dbReference type="VEuPathDB" id="MicrosporidiaDB:EHEL_060160"/>
<dbReference type="VEuPathDB" id="MicrosporidiaDB:KMI_03g04590"/>
<dbReference type="GO" id="GO:0044099">
    <property type="term" value="C:polar tube"/>
    <property type="evidence" value="ECO:0007669"/>
    <property type="project" value="UniProtKB-SubCell"/>
</dbReference>
<dbReference type="GO" id="GO:0030435">
    <property type="term" value="P:sporulation resulting in formation of a cellular spore"/>
    <property type="evidence" value="ECO:0007669"/>
    <property type="project" value="UniProtKB-KW"/>
</dbReference>
<dbReference type="InterPro" id="IPR031507">
    <property type="entry name" value="PTP2"/>
</dbReference>
<dbReference type="Pfam" id="PF17022">
    <property type="entry name" value="PTP2"/>
    <property type="match status" value="1"/>
</dbReference>
<comment type="function">
    <text evidence="1">Involved in formation of a polar tube through which the infectious agent is passed on to the host cell.</text>
</comment>
<comment type="subcellular location">
    <subcellularLocation>
        <location evidence="1">Spore polar tube</location>
    </subcellularLocation>
</comment>
<sequence length="272" mass="29342">MLLLFTVVTLVSAAQVAPVTPQAAVPTQFLPGAQQKIGGVDNRCANKQVEGVQIFQGDMADCPKRNSEAANAMVQRAKQKALEIYNKEISKGPTPKDSGQCIERAVQGTDRCILAKIIDKAVNMLKYRISKVGNATALFRGNKLISLILNVDYGLKPFFTVVKKKTKRVFPQGDELNFNGIGQLIGVKGTFPQDNNDECKPCDSPKKTVETVAEECNLGCQLKGTPGLISRAIQKKEVKESSKDGEKSSTQNGEGTTDDEDGQQSPDGNGPE</sequence>
<organism>
    <name type="scientific">Encephalitozoon hellem</name>
    <name type="common">Microsporidian parasite</name>
    <dbReference type="NCBI Taxonomy" id="27973"/>
    <lineage>
        <taxon>Eukaryota</taxon>
        <taxon>Fungi</taxon>
        <taxon>Fungi incertae sedis</taxon>
        <taxon>Microsporidia</taxon>
        <taxon>Unikaryonidae</taxon>
        <taxon>Encephalitozoon</taxon>
    </lineage>
</organism>
<feature type="signal peptide" evidence="2">
    <location>
        <begin position="1"/>
        <end position="21"/>
    </location>
</feature>
<feature type="chain" id="PRO_0000377527" description="Polar tube protein 2">
    <location>
        <begin position="22"/>
        <end position="272"/>
    </location>
</feature>
<feature type="region of interest" description="Disordered" evidence="3">
    <location>
        <begin position="231"/>
        <end position="272"/>
    </location>
</feature>
<feature type="compositionally biased region" description="Basic and acidic residues" evidence="3">
    <location>
        <begin position="234"/>
        <end position="247"/>
    </location>
</feature>
<feature type="compositionally biased region" description="Polar residues" evidence="3">
    <location>
        <begin position="263"/>
        <end position="272"/>
    </location>
</feature>
<feature type="glycosylation site" description="N-linked (GlcNAc...) asparagine" evidence="2">
    <location>
        <position position="134"/>
    </location>
</feature>
<keyword id="KW-0325">Glycoprotein</keyword>
<keyword id="KW-0732">Signal</keyword>
<keyword id="KW-0749">Sporulation</keyword>